<reference key="1">
    <citation type="journal article" date="2006" name="Environ. Microbiol.">
        <title>Whole genome analysis of the marine Bacteroidetes'Gramella forsetii' reveals adaptations to degradation of polymeric organic matter.</title>
        <authorList>
            <person name="Bauer M."/>
            <person name="Kube M."/>
            <person name="Teeling H."/>
            <person name="Richter M."/>
            <person name="Lombardot T."/>
            <person name="Allers E."/>
            <person name="Wuerdemann C.A."/>
            <person name="Quast C."/>
            <person name="Kuhl H."/>
            <person name="Knaust F."/>
            <person name="Woebken D."/>
            <person name="Bischof K."/>
            <person name="Mussmann M."/>
            <person name="Choudhuri J.V."/>
            <person name="Meyer F."/>
            <person name="Reinhardt R."/>
            <person name="Amann R.I."/>
            <person name="Gloeckner F.O."/>
        </authorList>
    </citation>
    <scope>NUCLEOTIDE SEQUENCE [LARGE SCALE GENOMIC DNA]</scope>
    <source>
        <strain>DSM 17595 / CGMCC 1.15422 / KT0803</strain>
    </source>
</reference>
<keyword id="KW-0067">ATP-binding</keyword>
<keyword id="KW-0963">Cytoplasm</keyword>
<keyword id="KW-0275">Fatty acid biosynthesis</keyword>
<keyword id="KW-0276">Fatty acid metabolism</keyword>
<keyword id="KW-0444">Lipid biosynthesis</keyword>
<keyword id="KW-0443">Lipid metabolism</keyword>
<keyword id="KW-0547">Nucleotide-binding</keyword>
<keyword id="KW-0808">Transferase</keyword>
<protein>
    <recommendedName>
        <fullName evidence="1">Acetyl-coenzyme A carboxylase carboxyl transferase subunit beta</fullName>
        <shortName evidence="1">ACCase subunit beta</shortName>
        <shortName evidence="1">Acetyl-CoA carboxylase carboxyltransferase subunit beta</shortName>
        <ecNumber evidence="1">2.1.3.15</ecNumber>
    </recommendedName>
</protein>
<evidence type="ECO:0000255" key="1">
    <source>
        <dbReference type="HAMAP-Rule" id="MF_01395"/>
    </source>
</evidence>
<evidence type="ECO:0000255" key="2">
    <source>
        <dbReference type="PROSITE-ProRule" id="PRU01136"/>
    </source>
</evidence>
<accession>A0LYC3</accession>
<sequence length="285" mass="31500">MAWFKRTQKGIQTPTEHKKDVPKGLWYKSPTGKIVDAEQLESNFYVSPEDGYHVRIGSNEYFKILFDDNKYKELDKGMTSKDPLDFEDTKKYTDRLKAAQEKTGLKDAVRCAVGKSKGNDLVIACMDFKFVGGSMGSVVGEKIARAADYALKNKLPFMIISKSGGARMQEAALSLMQLAKTSVKLAQLADAKIPYISLATDPTTGGTTASFAMLGDINISEPGALIGFAGPRVVKDTTGKDLPKDFQTSEFLKEKGFLDFITKRSELKNKINLYLDLIQNQPVRA</sequence>
<comment type="function">
    <text evidence="1">Component of the acetyl coenzyme A carboxylase (ACC) complex. Biotin carboxylase (BC) catalyzes the carboxylation of biotin on its carrier protein (BCCP) and then the CO(2) group is transferred by the transcarboxylase to acetyl-CoA to form malonyl-CoA.</text>
</comment>
<comment type="catalytic activity">
    <reaction evidence="1">
        <text>N(6)-carboxybiotinyl-L-lysyl-[protein] + acetyl-CoA = N(6)-biotinyl-L-lysyl-[protein] + malonyl-CoA</text>
        <dbReference type="Rhea" id="RHEA:54728"/>
        <dbReference type="Rhea" id="RHEA-COMP:10505"/>
        <dbReference type="Rhea" id="RHEA-COMP:10506"/>
        <dbReference type="ChEBI" id="CHEBI:57288"/>
        <dbReference type="ChEBI" id="CHEBI:57384"/>
        <dbReference type="ChEBI" id="CHEBI:83144"/>
        <dbReference type="ChEBI" id="CHEBI:83145"/>
        <dbReference type="EC" id="2.1.3.15"/>
    </reaction>
</comment>
<comment type="pathway">
    <text evidence="1">Lipid metabolism; malonyl-CoA biosynthesis; malonyl-CoA from acetyl-CoA: step 1/1.</text>
</comment>
<comment type="subunit">
    <text evidence="1">Acetyl-CoA carboxylase is a heterohexamer composed of biotin carboxyl carrier protein (AccB), biotin carboxylase (AccC) and two subunits each of ACCase subunit alpha (AccA) and ACCase subunit beta (AccD).</text>
</comment>
<comment type="subcellular location">
    <subcellularLocation>
        <location evidence="1">Cytoplasm</location>
    </subcellularLocation>
</comment>
<comment type="similarity">
    <text evidence="1">Belongs to the AccD/PCCB family.</text>
</comment>
<dbReference type="EC" id="2.1.3.15" evidence="1"/>
<dbReference type="EMBL" id="CU207366">
    <property type="protein sequence ID" value="CAL65368.1"/>
    <property type="molecule type" value="Genomic_DNA"/>
</dbReference>
<dbReference type="RefSeq" id="WP_011708306.1">
    <property type="nucleotide sequence ID" value="NC_008571.1"/>
</dbReference>
<dbReference type="SMR" id="A0LYC3"/>
<dbReference type="STRING" id="411154.GFO_0383"/>
<dbReference type="KEGG" id="gfo:GFO_0383"/>
<dbReference type="eggNOG" id="COG0777">
    <property type="taxonomic scope" value="Bacteria"/>
</dbReference>
<dbReference type="HOGENOM" id="CLU_015486_1_1_10"/>
<dbReference type="OrthoDB" id="9772975at2"/>
<dbReference type="UniPathway" id="UPA00655">
    <property type="reaction ID" value="UER00711"/>
</dbReference>
<dbReference type="Proteomes" id="UP000000755">
    <property type="component" value="Chromosome"/>
</dbReference>
<dbReference type="GO" id="GO:0009317">
    <property type="term" value="C:acetyl-CoA carboxylase complex"/>
    <property type="evidence" value="ECO:0007669"/>
    <property type="project" value="InterPro"/>
</dbReference>
<dbReference type="GO" id="GO:0003989">
    <property type="term" value="F:acetyl-CoA carboxylase activity"/>
    <property type="evidence" value="ECO:0007669"/>
    <property type="project" value="InterPro"/>
</dbReference>
<dbReference type="GO" id="GO:0005524">
    <property type="term" value="F:ATP binding"/>
    <property type="evidence" value="ECO:0007669"/>
    <property type="project" value="UniProtKB-KW"/>
</dbReference>
<dbReference type="GO" id="GO:0016743">
    <property type="term" value="F:carboxyl- or carbamoyltransferase activity"/>
    <property type="evidence" value="ECO:0007669"/>
    <property type="project" value="UniProtKB-UniRule"/>
</dbReference>
<dbReference type="GO" id="GO:0006633">
    <property type="term" value="P:fatty acid biosynthetic process"/>
    <property type="evidence" value="ECO:0007669"/>
    <property type="project" value="UniProtKB-KW"/>
</dbReference>
<dbReference type="GO" id="GO:2001295">
    <property type="term" value="P:malonyl-CoA biosynthetic process"/>
    <property type="evidence" value="ECO:0007669"/>
    <property type="project" value="UniProtKB-UniRule"/>
</dbReference>
<dbReference type="Gene3D" id="3.90.226.10">
    <property type="entry name" value="2-enoyl-CoA Hydratase, Chain A, domain 1"/>
    <property type="match status" value="1"/>
</dbReference>
<dbReference type="HAMAP" id="MF_01395">
    <property type="entry name" value="AcetylCoA_CT_beta"/>
    <property type="match status" value="1"/>
</dbReference>
<dbReference type="InterPro" id="IPR034733">
    <property type="entry name" value="AcCoA_carboxyl_beta"/>
</dbReference>
<dbReference type="InterPro" id="IPR000438">
    <property type="entry name" value="Acetyl_CoA_COase_Trfase_b_su"/>
</dbReference>
<dbReference type="InterPro" id="IPR029045">
    <property type="entry name" value="ClpP/crotonase-like_dom_sf"/>
</dbReference>
<dbReference type="InterPro" id="IPR011762">
    <property type="entry name" value="COA_CT_N"/>
</dbReference>
<dbReference type="NCBIfam" id="TIGR00515">
    <property type="entry name" value="accD"/>
    <property type="match status" value="1"/>
</dbReference>
<dbReference type="PANTHER" id="PTHR42995">
    <property type="entry name" value="ACETYL-COENZYME A CARBOXYLASE CARBOXYL TRANSFERASE SUBUNIT BETA, CHLOROPLASTIC"/>
    <property type="match status" value="1"/>
</dbReference>
<dbReference type="PANTHER" id="PTHR42995:SF5">
    <property type="entry name" value="ACETYL-COENZYME A CARBOXYLASE CARBOXYL TRANSFERASE SUBUNIT BETA, CHLOROPLASTIC"/>
    <property type="match status" value="1"/>
</dbReference>
<dbReference type="Pfam" id="PF01039">
    <property type="entry name" value="Carboxyl_trans"/>
    <property type="match status" value="1"/>
</dbReference>
<dbReference type="PRINTS" id="PR01070">
    <property type="entry name" value="ACCCTRFRASEB"/>
</dbReference>
<dbReference type="SUPFAM" id="SSF52096">
    <property type="entry name" value="ClpP/crotonase"/>
    <property type="match status" value="1"/>
</dbReference>
<dbReference type="PROSITE" id="PS50980">
    <property type="entry name" value="COA_CT_NTER"/>
    <property type="match status" value="1"/>
</dbReference>
<gene>
    <name evidence="1" type="primary">accD</name>
    <name type="ordered locus">GFO_0383</name>
</gene>
<proteinExistence type="inferred from homology"/>
<name>ACCD_CHRFK</name>
<feature type="chain" id="PRO_0000389751" description="Acetyl-coenzyme A carboxylase carboxyl transferase subunit beta">
    <location>
        <begin position="1"/>
        <end position="285"/>
    </location>
</feature>
<feature type="domain" description="CoA carboxyltransferase N-terminal" evidence="2">
    <location>
        <begin position="24"/>
        <end position="285"/>
    </location>
</feature>
<organism>
    <name type="scientific">Christiangramia forsetii (strain DSM 17595 / CGMCC 1.15422 / KT0803)</name>
    <name type="common">Gramella forsetii</name>
    <dbReference type="NCBI Taxonomy" id="411154"/>
    <lineage>
        <taxon>Bacteria</taxon>
        <taxon>Pseudomonadati</taxon>
        <taxon>Bacteroidota</taxon>
        <taxon>Flavobacteriia</taxon>
        <taxon>Flavobacteriales</taxon>
        <taxon>Flavobacteriaceae</taxon>
        <taxon>Christiangramia</taxon>
    </lineage>
</organism>